<proteinExistence type="inferred from homology"/>
<evidence type="ECO:0000255" key="1">
    <source>
        <dbReference type="HAMAP-Rule" id="MF_01342"/>
    </source>
</evidence>
<evidence type="ECO:0000256" key="2">
    <source>
        <dbReference type="SAM" id="MobiDB-lite"/>
    </source>
</evidence>
<evidence type="ECO:0000305" key="3"/>
<name>RL16_BUCAK</name>
<sequence>MLQPKRTKFRKRHKGRNRGLANGTDVHFGTFGIKAVDRGQMTARQIEAARRTITRAIKRQGQVWIRVYPDTPVTEKPLEVRMGNGKGNVEYWVSKIQPGKVLYEIDGVPEEAAREAFALATSKLPLRTTFVTKTVM</sequence>
<reference key="1">
    <citation type="journal article" date="1994" name="DNA Res.">
        <title>Cloning and characterization of the ribosomal protein genes in the spc operon of a prokaryotic endosymbiont of the pea aphid, Acyrthosiphon kondoi.</title>
        <authorList>
            <person name="Abe R."/>
            <person name="Yamashita A."/>
            <person name="Isono K."/>
        </authorList>
    </citation>
    <scope>NUCLEOTIDE SEQUENCE [GENOMIC DNA]</scope>
    <source>
        <strain>Kurashiki</strain>
    </source>
</reference>
<dbReference type="EMBL" id="D31786">
    <property type="protein sequence ID" value="BAA06582.1"/>
    <property type="molecule type" value="Genomic_DNA"/>
</dbReference>
<dbReference type="SMR" id="P46173"/>
<dbReference type="GO" id="GO:0022625">
    <property type="term" value="C:cytosolic large ribosomal subunit"/>
    <property type="evidence" value="ECO:0007669"/>
    <property type="project" value="TreeGrafter"/>
</dbReference>
<dbReference type="GO" id="GO:0019843">
    <property type="term" value="F:rRNA binding"/>
    <property type="evidence" value="ECO:0007669"/>
    <property type="project" value="UniProtKB-UniRule"/>
</dbReference>
<dbReference type="GO" id="GO:0003735">
    <property type="term" value="F:structural constituent of ribosome"/>
    <property type="evidence" value="ECO:0007669"/>
    <property type="project" value="InterPro"/>
</dbReference>
<dbReference type="GO" id="GO:0000049">
    <property type="term" value="F:tRNA binding"/>
    <property type="evidence" value="ECO:0007669"/>
    <property type="project" value="UniProtKB-KW"/>
</dbReference>
<dbReference type="GO" id="GO:0006412">
    <property type="term" value="P:translation"/>
    <property type="evidence" value="ECO:0007669"/>
    <property type="project" value="UniProtKB-UniRule"/>
</dbReference>
<dbReference type="CDD" id="cd01433">
    <property type="entry name" value="Ribosomal_L16_L10e"/>
    <property type="match status" value="1"/>
</dbReference>
<dbReference type="FunFam" id="3.90.1170.10:FF:000001">
    <property type="entry name" value="50S ribosomal protein L16"/>
    <property type="match status" value="1"/>
</dbReference>
<dbReference type="Gene3D" id="3.90.1170.10">
    <property type="entry name" value="Ribosomal protein L10e/L16"/>
    <property type="match status" value="1"/>
</dbReference>
<dbReference type="HAMAP" id="MF_01342">
    <property type="entry name" value="Ribosomal_uL16"/>
    <property type="match status" value="1"/>
</dbReference>
<dbReference type="InterPro" id="IPR047873">
    <property type="entry name" value="Ribosomal_uL16"/>
</dbReference>
<dbReference type="InterPro" id="IPR000114">
    <property type="entry name" value="Ribosomal_uL16_bact-type"/>
</dbReference>
<dbReference type="InterPro" id="IPR020798">
    <property type="entry name" value="Ribosomal_uL16_CS"/>
</dbReference>
<dbReference type="InterPro" id="IPR016180">
    <property type="entry name" value="Ribosomal_uL16_dom"/>
</dbReference>
<dbReference type="InterPro" id="IPR036920">
    <property type="entry name" value="Ribosomal_uL16_sf"/>
</dbReference>
<dbReference type="NCBIfam" id="TIGR01164">
    <property type="entry name" value="rplP_bact"/>
    <property type="match status" value="1"/>
</dbReference>
<dbReference type="PANTHER" id="PTHR12220">
    <property type="entry name" value="50S/60S RIBOSOMAL PROTEIN L16"/>
    <property type="match status" value="1"/>
</dbReference>
<dbReference type="PANTHER" id="PTHR12220:SF13">
    <property type="entry name" value="LARGE RIBOSOMAL SUBUNIT PROTEIN UL16M"/>
    <property type="match status" value="1"/>
</dbReference>
<dbReference type="Pfam" id="PF00252">
    <property type="entry name" value="Ribosomal_L16"/>
    <property type="match status" value="1"/>
</dbReference>
<dbReference type="PRINTS" id="PR00060">
    <property type="entry name" value="RIBOSOMALL16"/>
</dbReference>
<dbReference type="SUPFAM" id="SSF54686">
    <property type="entry name" value="Ribosomal protein L16p/L10e"/>
    <property type="match status" value="1"/>
</dbReference>
<dbReference type="PROSITE" id="PS00586">
    <property type="entry name" value="RIBOSOMAL_L16_1"/>
    <property type="match status" value="1"/>
</dbReference>
<dbReference type="PROSITE" id="PS00701">
    <property type="entry name" value="RIBOSOMAL_L16_2"/>
    <property type="match status" value="1"/>
</dbReference>
<protein>
    <recommendedName>
        <fullName evidence="1">Large ribosomal subunit protein uL16</fullName>
    </recommendedName>
    <alternativeName>
        <fullName evidence="3">50S ribosomal protein L16</fullName>
    </alternativeName>
</protein>
<comment type="function">
    <text evidence="1">Binds 23S rRNA and is also seen to make contacts with the A and possibly P site tRNAs.</text>
</comment>
<comment type="subunit">
    <text evidence="1">Part of the 50S ribosomal subunit.</text>
</comment>
<comment type="similarity">
    <text evidence="1">Belongs to the universal ribosomal protein uL16 family.</text>
</comment>
<gene>
    <name evidence="1" type="primary">rplP</name>
</gene>
<organism>
    <name type="scientific">Buchnera aphidicola subsp. Acyrthosiphon kondoi</name>
    <name type="common">Acyrthosiphon kondoi symbiotic bacterium</name>
    <dbReference type="NCBI Taxonomy" id="42474"/>
    <lineage>
        <taxon>Bacteria</taxon>
        <taxon>Pseudomonadati</taxon>
        <taxon>Pseudomonadota</taxon>
        <taxon>Gammaproteobacteria</taxon>
        <taxon>Enterobacterales</taxon>
        <taxon>Erwiniaceae</taxon>
        <taxon>Buchnera</taxon>
    </lineage>
</organism>
<feature type="chain" id="PRO_0000062064" description="Large ribosomal subunit protein uL16">
    <location>
        <begin position="1"/>
        <end position="136"/>
    </location>
</feature>
<feature type="region of interest" description="Disordered" evidence="2">
    <location>
        <begin position="1"/>
        <end position="21"/>
    </location>
</feature>
<feature type="compositionally biased region" description="Basic residues" evidence="2">
    <location>
        <begin position="1"/>
        <end position="17"/>
    </location>
</feature>
<keyword id="KW-0687">Ribonucleoprotein</keyword>
<keyword id="KW-0689">Ribosomal protein</keyword>
<keyword id="KW-0694">RNA-binding</keyword>
<keyword id="KW-0699">rRNA-binding</keyword>
<keyword id="KW-0820">tRNA-binding</keyword>
<accession>P46173</accession>